<organism>
    <name type="scientific">Escherichia coli O6:H1 (strain CFT073 / ATCC 700928 / UPEC)</name>
    <dbReference type="NCBI Taxonomy" id="199310"/>
    <lineage>
        <taxon>Bacteria</taxon>
        <taxon>Pseudomonadati</taxon>
        <taxon>Pseudomonadota</taxon>
        <taxon>Gammaproteobacteria</taxon>
        <taxon>Enterobacterales</taxon>
        <taxon>Enterobacteriaceae</taxon>
        <taxon>Escherichia</taxon>
    </lineage>
</organism>
<name>MDTP_ECOL6</name>
<gene>
    <name type="primary">mdtP</name>
    <name type="ordered locus">c5085</name>
</gene>
<keyword id="KW-0046">Antibiotic resistance</keyword>
<keyword id="KW-0998">Cell outer membrane</keyword>
<keyword id="KW-0449">Lipoprotein</keyword>
<keyword id="KW-0472">Membrane</keyword>
<keyword id="KW-0564">Palmitate</keyword>
<keyword id="KW-1185">Reference proteome</keyword>
<keyword id="KW-0732">Signal</keyword>
<keyword id="KW-0812">Transmembrane</keyword>
<keyword id="KW-1134">Transmembrane beta strand</keyword>
<comment type="function">
    <text evidence="1">Could be involved in resistance to puromycin, acriflavine and tetraphenylarsonium chloride.</text>
</comment>
<comment type="subunit">
    <text evidence="1">Could be part of a tripartite efflux system composed of MdtN, MdtO and MdtP.</text>
</comment>
<comment type="subcellular location">
    <subcellularLocation>
        <location evidence="3">Cell outer membrane</location>
        <topology evidence="2">Lipid-anchor</topology>
    </subcellularLocation>
</comment>
<comment type="similarity">
    <text evidence="3">Belongs to the outer membrane factor (OMF) (TC 1.B.17) family.</text>
</comment>
<proteinExistence type="inferred from homology"/>
<protein>
    <recommendedName>
        <fullName>Multidrug resistance outer membrane protein MdtP</fullName>
    </recommendedName>
</protein>
<evidence type="ECO:0000250" key="1"/>
<evidence type="ECO:0000255" key="2">
    <source>
        <dbReference type="PROSITE-ProRule" id="PRU00303"/>
    </source>
</evidence>
<evidence type="ECO:0000305" key="3"/>
<feature type="signal peptide" evidence="2">
    <location>
        <begin position="1"/>
        <end position="23"/>
    </location>
</feature>
<feature type="chain" id="PRO_0000031011" description="Multidrug resistance outer membrane protein MdtP">
    <location>
        <begin position="24"/>
        <end position="488"/>
    </location>
</feature>
<feature type="lipid moiety-binding region" description="N-palmitoyl cysteine" evidence="2">
    <location>
        <position position="24"/>
    </location>
</feature>
<feature type="lipid moiety-binding region" description="S-diacylglycerol cysteine" evidence="2">
    <location>
        <position position="24"/>
    </location>
</feature>
<dbReference type="EMBL" id="AE014075">
    <property type="protein sequence ID" value="AAN83510.1"/>
    <property type="molecule type" value="Genomic_DNA"/>
</dbReference>
<dbReference type="RefSeq" id="WP_000610612.1">
    <property type="nucleotide sequence ID" value="NZ_CP051263.1"/>
</dbReference>
<dbReference type="SMR" id="Q8CVH8"/>
<dbReference type="STRING" id="199310.c5085"/>
<dbReference type="KEGG" id="ecc:c5085"/>
<dbReference type="eggNOG" id="COG1538">
    <property type="taxonomic scope" value="Bacteria"/>
</dbReference>
<dbReference type="HOGENOM" id="CLU_012817_6_3_6"/>
<dbReference type="BioCyc" id="ECOL199310:C5085-MONOMER"/>
<dbReference type="Proteomes" id="UP000001410">
    <property type="component" value="Chromosome"/>
</dbReference>
<dbReference type="GO" id="GO:0009279">
    <property type="term" value="C:cell outer membrane"/>
    <property type="evidence" value="ECO:0007669"/>
    <property type="project" value="UniProtKB-SubCell"/>
</dbReference>
<dbReference type="GO" id="GO:0015562">
    <property type="term" value="F:efflux transmembrane transporter activity"/>
    <property type="evidence" value="ECO:0007669"/>
    <property type="project" value="InterPro"/>
</dbReference>
<dbReference type="GO" id="GO:0046677">
    <property type="term" value="P:response to antibiotic"/>
    <property type="evidence" value="ECO:0007669"/>
    <property type="project" value="UniProtKB-KW"/>
</dbReference>
<dbReference type="Gene3D" id="1.20.1600.10">
    <property type="entry name" value="Outer membrane efflux proteins (OEP)"/>
    <property type="match status" value="1"/>
</dbReference>
<dbReference type="Gene3D" id="2.20.200.10">
    <property type="entry name" value="Outer membrane efflux proteins (OEP)"/>
    <property type="match status" value="1"/>
</dbReference>
<dbReference type="InterPro" id="IPR050737">
    <property type="entry name" value="OMF"/>
</dbReference>
<dbReference type="InterPro" id="IPR003423">
    <property type="entry name" value="OMP_efflux"/>
</dbReference>
<dbReference type="InterPro" id="IPR010131">
    <property type="entry name" value="RND_efflux_OM_lipoprot_NodT"/>
</dbReference>
<dbReference type="NCBIfam" id="TIGR01845">
    <property type="entry name" value="outer_NodT"/>
    <property type="match status" value="1"/>
</dbReference>
<dbReference type="NCBIfam" id="NF007390">
    <property type="entry name" value="PRK09915.1"/>
    <property type="match status" value="1"/>
</dbReference>
<dbReference type="PANTHER" id="PTHR30203:SF20">
    <property type="entry name" value="MULTIDRUG RESISTANCE OUTER MEMBRANE PROTEIN MDTP-RELATED"/>
    <property type="match status" value="1"/>
</dbReference>
<dbReference type="PANTHER" id="PTHR30203">
    <property type="entry name" value="OUTER MEMBRANE CATION EFFLUX PROTEIN"/>
    <property type="match status" value="1"/>
</dbReference>
<dbReference type="Pfam" id="PF02321">
    <property type="entry name" value="OEP"/>
    <property type="match status" value="1"/>
</dbReference>
<dbReference type="SUPFAM" id="SSF56954">
    <property type="entry name" value="Outer membrane efflux proteins (OEP)"/>
    <property type="match status" value="1"/>
</dbReference>
<dbReference type="PROSITE" id="PS51257">
    <property type="entry name" value="PROKAR_LIPOPROTEIN"/>
    <property type="match status" value="1"/>
</dbReference>
<reference key="1">
    <citation type="journal article" date="2002" name="Proc. Natl. Acad. Sci. U.S.A.">
        <title>Extensive mosaic structure revealed by the complete genome sequence of uropathogenic Escherichia coli.</title>
        <authorList>
            <person name="Welch R.A."/>
            <person name="Burland V."/>
            <person name="Plunkett G. III"/>
            <person name="Redford P."/>
            <person name="Roesch P."/>
            <person name="Rasko D."/>
            <person name="Buckles E.L."/>
            <person name="Liou S.-R."/>
            <person name="Boutin A."/>
            <person name="Hackett J."/>
            <person name="Stroud D."/>
            <person name="Mayhew G.F."/>
            <person name="Rose D.J."/>
            <person name="Zhou S."/>
            <person name="Schwartz D.C."/>
            <person name="Perna N.T."/>
            <person name="Mobley H.L.T."/>
            <person name="Donnenberg M.S."/>
            <person name="Blattner F.R."/>
        </authorList>
    </citation>
    <scope>NUCLEOTIDE SEQUENCE [LARGE SCALE GENOMIC DNA]</scope>
    <source>
        <strain>CFT073 / ATCC 700928 / UPEC</strain>
    </source>
</reference>
<accession>Q8CVH8</accession>
<sequence>MINRQLSRLLLCSILGSTTLISGCALVRKDSAPHQQLKPEQIKLADDIHLASSGWPQAQWWKQLNDPQLDSLIQRTLSGSHPLAEAKLREEKAQSQADLLDAGSQLQVAALGMLNRQRVSANGFLSPYAMDAPALGMDGPYYTEATVGLFAGLDLDLWGVHRSAVAAAIGAHNAALAETAAVELSLTTGVAQLYYSMQASYQMLDLLEQTRDVIDYAVKAHQSKVAHGLEAQVPFHGARAQILAVDKQIAAVKGQITETRESLRALIGAGASDMPEIKPVALPRVQTGIPATLSYELLARRPDLQAMRWYVQASLDQVDSARALFYPSFDIKAFFGLDSIHLDTLFKKTSRQFNFIPGLKLPLFDGGRLNANLEGTRAASNMMIERYNQSVLNAVRDVAVNGTRLQTLNDEREMQAERVEATRFTQRAAEAAYQRGLTSRLQATEARLPVLAEEMSLLMLDSRRVIQSIQLMKSLGGGYQAAPIVEKK</sequence>